<protein>
    <recommendedName>
        <fullName evidence="4">Large ribosomal subunit protein uL18</fullName>
    </recommendedName>
    <alternativeName>
        <fullName>60S ribosomal protein L5</fullName>
    </alternativeName>
</protein>
<gene>
    <name type="primary">RPL5</name>
    <name type="ORF">QccE-13782</name>
</gene>
<name>RL5_MACFA</name>
<dbReference type="EMBL" id="AB169523">
    <property type="protein sequence ID" value="BAE01605.1"/>
    <property type="molecule type" value="mRNA"/>
</dbReference>
<dbReference type="RefSeq" id="NP_001270867.1">
    <property type="nucleotide sequence ID" value="NM_001283938.1"/>
</dbReference>
<dbReference type="SMR" id="Q4R5M0"/>
<dbReference type="STRING" id="9541.ENSMFAP00000000128"/>
<dbReference type="eggNOG" id="KOG0875">
    <property type="taxonomic scope" value="Eukaryota"/>
</dbReference>
<dbReference type="Proteomes" id="UP000233100">
    <property type="component" value="Unplaced"/>
</dbReference>
<dbReference type="GO" id="GO:0005737">
    <property type="term" value="C:cytoplasm"/>
    <property type="evidence" value="ECO:0000250"/>
    <property type="project" value="UniProtKB"/>
</dbReference>
<dbReference type="GO" id="GO:0022625">
    <property type="term" value="C:cytosolic large ribosomal subunit"/>
    <property type="evidence" value="ECO:0007669"/>
    <property type="project" value="TreeGrafter"/>
</dbReference>
<dbReference type="GO" id="GO:0005730">
    <property type="term" value="C:nucleolus"/>
    <property type="evidence" value="ECO:0000250"/>
    <property type="project" value="UniProtKB"/>
</dbReference>
<dbReference type="GO" id="GO:0008097">
    <property type="term" value="F:5S rRNA binding"/>
    <property type="evidence" value="ECO:0007669"/>
    <property type="project" value="InterPro"/>
</dbReference>
<dbReference type="GO" id="GO:0003735">
    <property type="term" value="F:structural constituent of ribosome"/>
    <property type="evidence" value="ECO:0007669"/>
    <property type="project" value="InterPro"/>
</dbReference>
<dbReference type="GO" id="GO:0000027">
    <property type="term" value="P:ribosomal large subunit assembly"/>
    <property type="evidence" value="ECO:0007669"/>
    <property type="project" value="TreeGrafter"/>
</dbReference>
<dbReference type="GO" id="GO:0006412">
    <property type="term" value="P:translation"/>
    <property type="evidence" value="ECO:0007669"/>
    <property type="project" value="InterPro"/>
</dbReference>
<dbReference type="CDD" id="cd00432">
    <property type="entry name" value="Ribosomal_L18_L5e"/>
    <property type="match status" value="1"/>
</dbReference>
<dbReference type="FunFam" id="3.30.420.100:FF:000002">
    <property type="entry name" value="60S ribosomal protein L5"/>
    <property type="match status" value="1"/>
</dbReference>
<dbReference type="Gene3D" id="3.30.420.100">
    <property type="match status" value="1"/>
</dbReference>
<dbReference type="HAMAP" id="MF_01337_A">
    <property type="entry name" value="Ribosomal_uL18_A"/>
    <property type="match status" value="1"/>
</dbReference>
<dbReference type="InterPro" id="IPR005485">
    <property type="entry name" value="Rbsml_uL18_euk"/>
</dbReference>
<dbReference type="InterPro" id="IPR025607">
    <property type="entry name" value="Ribosomal_uL18_C_euk"/>
</dbReference>
<dbReference type="PANTHER" id="PTHR23410:SF12">
    <property type="entry name" value="LARGE RIBOSOMAL SUBUNIT PROTEIN UL18"/>
    <property type="match status" value="1"/>
</dbReference>
<dbReference type="PANTHER" id="PTHR23410">
    <property type="entry name" value="RIBOSOMAL PROTEIN L5-RELATED"/>
    <property type="match status" value="1"/>
</dbReference>
<dbReference type="Pfam" id="PF14204">
    <property type="entry name" value="Ribosomal_L18_c"/>
    <property type="match status" value="1"/>
</dbReference>
<dbReference type="Pfam" id="PF17144">
    <property type="entry name" value="Ribosomal_L5e"/>
    <property type="match status" value="1"/>
</dbReference>
<dbReference type="PRINTS" id="PR00058">
    <property type="entry name" value="RIBOSOMALL5"/>
</dbReference>
<dbReference type="SUPFAM" id="SSF53137">
    <property type="entry name" value="Translational machinery components"/>
    <property type="match status" value="1"/>
</dbReference>
<sequence>MGFVKVVKNKAYFKRYQVKFRRRREGKTDYYARKRLVIQDKNKYNTPKYRMIVRVTNRDIICQIAYARIEGDMIVCAAYAHKLPKYGVKVGLTNYAAAYCTGLLLARRLLNRFGMDKIYEGQVEVTGDEYNVESIDGQPGAFTCYLDAGLARTTTGNKVFGALKGAVDGGLSIPHSTKRFPGYDSESKEFNAEVHRKHIMGQNVADYMRYLMEEDEDAYKKQFSQYIKNSVTPDMMEEMYKKAHAAIRENPVYEKKPKKEVKKKRWNRPKMSLAQKKDRVAQKKASFLRAQERAAES</sequence>
<evidence type="ECO:0000250" key="1">
    <source>
        <dbReference type="UniProtKB" id="P46777"/>
    </source>
</evidence>
<evidence type="ECO:0000250" key="2">
    <source>
        <dbReference type="UniProtKB" id="P47962"/>
    </source>
</evidence>
<evidence type="ECO:0000256" key="3">
    <source>
        <dbReference type="SAM" id="MobiDB-lite"/>
    </source>
</evidence>
<evidence type="ECO:0000305" key="4"/>
<proteinExistence type="evidence at transcript level"/>
<organism>
    <name type="scientific">Macaca fascicularis</name>
    <name type="common">Crab-eating macaque</name>
    <name type="synonym">Cynomolgus monkey</name>
    <dbReference type="NCBI Taxonomy" id="9541"/>
    <lineage>
        <taxon>Eukaryota</taxon>
        <taxon>Metazoa</taxon>
        <taxon>Chordata</taxon>
        <taxon>Craniata</taxon>
        <taxon>Vertebrata</taxon>
        <taxon>Euteleostomi</taxon>
        <taxon>Mammalia</taxon>
        <taxon>Eutheria</taxon>
        <taxon>Euarchontoglires</taxon>
        <taxon>Primates</taxon>
        <taxon>Haplorrhini</taxon>
        <taxon>Catarrhini</taxon>
        <taxon>Cercopithecidae</taxon>
        <taxon>Cercopithecinae</taxon>
        <taxon>Macaca</taxon>
    </lineage>
</organism>
<comment type="function">
    <text evidence="1">Component of the ribosome, a large ribonucleoprotein complex responsible for the synthesis of proteins in the cell. The small ribosomal subunit (SSU) binds messenger RNAs (mRNAs) and translates the encoded message by selecting cognate aminoacyl-transfer RNA (tRNA) molecules. The large subunit (LSU) contains the ribosomal catalytic site termed the peptidyl transferase center (PTC), which catalyzes the formation of peptide bonds, thereby polymerizing the amino acids delivered by tRNAs into a polypeptide chain. The nascent polypeptides leave the ribosome through a tunnel in the LSU and interact with protein factors that function in enzymatic processing, targeting, and the membrane insertion of nascent chains at the exit of the ribosomal tunnel. As part of the 5S RNP/5S ribonucleoprotein particle it is an essential component of the LSU, required for its formation and the maturation of rRNAs. It also couples ribosome biogenesis to p53/TP53 activation. As part of the 5S RNP it accumulates in the nucleoplasm and inhibits MDM2, when ribosome biogenesis is perturbed, mediating the stabilization and the activation of TP53.</text>
</comment>
<comment type="subunit">
    <text evidence="1">Component of the large ribosomal subunit (LSU). Part of the 5S RNP complex, which is a LSU subcomplex composed of the 5S RNA, RPL5 and RPL11 (By similarity). Component of a hexameric 5S RNP precursor complex, composed of 5S RNA, RRS1, RPF2/BXDC1, RPL5, RPL11 and HEATR3; this complex acts as a precursor for ribosome assembly (By similarity). Interacts with NVL in an ATP-dependent manner. Interacts with RRP1B (By similarity). Interacts with IPO5, IPO7 and KPNB1; these interactions may be involved in RPL5 nuclear import for the assembly of ribosomal subunits (By similarity). Interacts with RRP1B (By similarity).</text>
</comment>
<comment type="subcellular location">
    <subcellularLocation>
        <location evidence="1">Cytoplasm</location>
    </subcellularLocation>
    <subcellularLocation>
        <location evidence="1">Nucleus</location>
        <location evidence="1">Nucleolus</location>
    </subcellularLocation>
    <text evidence="1">Although RP5 is functional within the cytoplasm, the assembly of ribosomal subunits occurs in the nucleus. RPL5 nuclear import is mediated by IPO5/RanBP5, IPO7/RanBP7, KPNB1/importin-beta or TPNO1/Trn.</text>
</comment>
<comment type="similarity">
    <text evidence="4">Belongs to the universal ribosomal protein uL18 family.</text>
</comment>
<accession>Q4R5M0</accession>
<reference key="1">
    <citation type="submission" date="2005-06" db="EMBL/GenBank/DDBJ databases">
        <title>DNA sequences of macaque genes expressed in brain or testis and its evolutionary implications.</title>
        <authorList>
            <consortium name="International consortium for macaque cDNA sequencing and analysis"/>
        </authorList>
    </citation>
    <scope>NUCLEOTIDE SEQUENCE [LARGE SCALE MRNA]</scope>
    <source>
        <tissue>Brain cortex</tissue>
    </source>
</reference>
<keyword id="KW-0007">Acetylation</keyword>
<keyword id="KW-0963">Cytoplasm</keyword>
<keyword id="KW-1017">Isopeptide bond</keyword>
<keyword id="KW-0539">Nucleus</keyword>
<keyword id="KW-0597">Phosphoprotein</keyword>
<keyword id="KW-1185">Reference proteome</keyword>
<keyword id="KW-0687">Ribonucleoprotein</keyword>
<keyword id="KW-0689">Ribosomal protein</keyword>
<keyword id="KW-0694">RNA-binding</keyword>
<keyword id="KW-0699">rRNA-binding</keyword>
<keyword id="KW-0832">Ubl conjugation</keyword>
<feature type="initiator methionine" description="Removed" evidence="1">
    <location>
        <position position="1"/>
    </location>
</feature>
<feature type="chain" id="PRO_0000131432" description="Large ribosomal subunit protein uL18">
    <location>
        <begin position="2"/>
        <end position="297"/>
    </location>
</feature>
<feature type="region of interest" description="Disordered" evidence="3">
    <location>
        <begin position="253"/>
        <end position="297"/>
    </location>
</feature>
<feature type="compositionally biased region" description="Basic residues" evidence="3">
    <location>
        <begin position="258"/>
        <end position="268"/>
    </location>
</feature>
<feature type="modified residue" description="N-acetylglycine" evidence="1">
    <location>
        <position position="2"/>
    </location>
</feature>
<feature type="modified residue" description="N6-acetyllysine" evidence="1">
    <location>
        <position position="5"/>
    </location>
</feature>
<feature type="modified residue" description="N6-acetyllysine" evidence="1">
    <location>
        <position position="48"/>
    </location>
</feature>
<feature type="modified residue" description="Phosphoserine" evidence="1">
    <location>
        <position position="185"/>
    </location>
</feature>
<feature type="modified residue" description="N6-acetyllysine; alternate" evidence="2">
    <location>
        <position position="220"/>
    </location>
</feature>
<feature type="modified residue" description="Phosphothreonine" evidence="1">
    <location>
        <position position="232"/>
    </location>
</feature>
<feature type="modified residue" description="Phosphoserine" evidence="1">
    <location>
        <position position="272"/>
    </location>
</feature>
<feature type="cross-link" description="Glycyl lysine isopeptide (Lys-Gly) (interchain with G-Cter in SUMO1); alternate" evidence="1">
    <location>
        <position position="220"/>
    </location>
</feature>
<feature type="cross-link" description="Glycyl lysine isopeptide (Lys-Gly) (interchain with G-Cter in SUMO2); alternate" evidence="1">
    <location>
        <position position="220"/>
    </location>
</feature>